<protein>
    <recommendedName>
        <fullName evidence="1">UPF0229 protein TERTU_3150</fullName>
    </recommendedName>
</protein>
<proteinExistence type="inferred from homology"/>
<gene>
    <name type="ordered locus">TERTU_3150</name>
</gene>
<comment type="similarity">
    <text evidence="1">Belongs to the UPF0229 family.</text>
</comment>
<organism>
    <name type="scientific">Teredinibacter turnerae (strain ATCC 39867 / T7901)</name>
    <dbReference type="NCBI Taxonomy" id="377629"/>
    <lineage>
        <taxon>Bacteria</taxon>
        <taxon>Pseudomonadati</taxon>
        <taxon>Pseudomonadota</taxon>
        <taxon>Gammaproteobacteria</taxon>
        <taxon>Cellvibrionales</taxon>
        <taxon>Cellvibrionaceae</taxon>
        <taxon>Teredinibacter</taxon>
    </lineage>
</organism>
<keyword id="KW-1185">Reference proteome</keyword>
<name>Y3150_TERTT</name>
<reference key="1">
    <citation type="journal article" date="2009" name="PLoS ONE">
        <title>The complete genome of Teredinibacter turnerae T7901: an intracellular endosymbiont of marine wood-boring bivalves (shipworms).</title>
        <authorList>
            <person name="Yang J.C."/>
            <person name="Madupu R."/>
            <person name="Durkin A.S."/>
            <person name="Ekborg N.A."/>
            <person name="Pedamallu C.S."/>
            <person name="Hostetler J.B."/>
            <person name="Radune D."/>
            <person name="Toms B.S."/>
            <person name="Henrissat B."/>
            <person name="Coutinho P.M."/>
            <person name="Schwarz S."/>
            <person name="Field L."/>
            <person name="Trindade-Silva A.E."/>
            <person name="Soares C.A.G."/>
            <person name="Elshahawi S."/>
            <person name="Hanora A."/>
            <person name="Schmidt E.W."/>
            <person name="Haygood M.G."/>
            <person name="Posfai J."/>
            <person name="Benner J."/>
            <person name="Madinger C."/>
            <person name="Nove J."/>
            <person name="Anton B."/>
            <person name="Chaudhary K."/>
            <person name="Foster J."/>
            <person name="Holman A."/>
            <person name="Kumar S."/>
            <person name="Lessard P.A."/>
            <person name="Luyten Y.A."/>
            <person name="Slatko B."/>
            <person name="Wood N."/>
            <person name="Wu B."/>
            <person name="Teplitski M."/>
            <person name="Mougous J.D."/>
            <person name="Ward N."/>
            <person name="Eisen J.A."/>
            <person name="Badger J.H."/>
            <person name="Distel D.L."/>
        </authorList>
    </citation>
    <scope>NUCLEOTIDE SEQUENCE [LARGE SCALE GENOMIC DNA]</scope>
    <source>
        <strain>ATCC 39867 / T7901</strain>
    </source>
</reference>
<sequence length="419" mass="48133">MSYIIDRRLNSKKKSMVNRQRFLRRYQQHIKKAVSDAVDRRSITDIESGESISIPTRDISEPIFHHGSGGKNNRVLPGNDRFNGGDHIERPEQGQGGGGNGSGASDSGEGEDDFVFQISQEEFLNFLFEDLALPNLVKRQLAGNEEFEFRRAGISNEGSPGKINIIRSLRSANSRRIALTGKKRRRLKEVEAELEILEPESAEAQALLAEAEELHAKIKRIPWLDDFDLKYNLHVKHPLPTSKAVMFCLMDVSGSMDQATKDIAKRFFLLLYLFLQRNYERTEVVFIRHHTSAKEVDEQEFFYSRETGGTIVSSALKMMDDILQTRYPASEWNIYGAQASDGDNWNDDSVICYRLLTEKLLPKVQYYSYIEITTRERQALWHAYEQVLSDFPNTFAMRQLQSAADIYPVFRQLFQKQTT</sequence>
<feature type="chain" id="PRO_1000214030" description="UPF0229 protein TERTU_3150">
    <location>
        <begin position="1"/>
        <end position="419"/>
    </location>
</feature>
<feature type="region of interest" description="Disordered" evidence="2">
    <location>
        <begin position="63"/>
        <end position="111"/>
    </location>
</feature>
<feature type="compositionally biased region" description="Basic and acidic residues" evidence="2">
    <location>
        <begin position="83"/>
        <end position="92"/>
    </location>
</feature>
<dbReference type="EMBL" id="CP001614">
    <property type="protein sequence ID" value="ACR13204.1"/>
    <property type="molecule type" value="Genomic_DNA"/>
</dbReference>
<dbReference type="RefSeq" id="WP_015819317.1">
    <property type="nucleotide sequence ID" value="NC_012997.1"/>
</dbReference>
<dbReference type="STRING" id="377629.TERTU_3150"/>
<dbReference type="KEGG" id="ttu:TERTU_3150"/>
<dbReference type="eggNOG" id="COG2718">
    <property type="taxonomic scope" value="Bacteria"/>
</dbReference>
<dbReference type="HOGENOM" id="CLU_049702_0_0_6"/>
<dbReference type="OrthoDB" id="9788289at2"/>
<dbReference type="Proteomes" id="UP000009080">
    <property type="component" value="Chromosome"/>
</dbReference>
<dbReference type="HAMAP" id="MF_01232">
    <property type="entry name" value="UPF0229"/>
    <property type="match status" value="1"/>
</dbReference>
<dbReference type="InterPro" id="IPR006698">
    <property type="entry name" value="UPF0229"/>
</dbReference>
<dbReference type="NCBIfam" id="NF003707">
    <property type="entry name" value="PRK05325.1-2"/>
    <property type="match status" value="1"/>
</dbReference>
<dbReference type="NCBIfam" id="NF003708">
    <property type="entry name" value="PRK05325.1-3"/>
    <property type="match status" value="1"/>
</dbReference>
<dbReference type="PANTHER" id="PTHR30510">
    <property type="entry name" value="UPF0229 PROTEIN YEAH"/>
    <property type="match status" value="1"/>
</dbReference>
<dbReference type="PANTHER" id="PTHR30510:SF2">
    <property type="entry name" value="UPF0229 PROTEIN YEAH"/>
    <property type="match status" value="1"/>
</dbReference>
<dbReference type="Pfam" id="PF04285">
    <property type="entry name" value="DUF444"/>
    <property type="match status" value="1"/>
</dbReference>
<accession>C5BPC3</accession>
<evidence type="ECO:0000255" key="1">
    <source>
        <dbReference type="HAMAP-Rule" id="MF_01232"/>
    </source>
</evidence>
<evidence type="ECO:0000256" key="2">
    <source>
        <dbReference type="SAM" id="MobiDB-lite"/>
    </source>
</evidence>